<comment type="function">
    <text evidence="2 4">Its primary physiological function is unclear. Has cytoprotective activity against internal or environmental stresses. May play a role in neuronal development and synaptic plasticity. May be required for neuronal myelin sheath maintenance. May play a role in iron uptake and iron homeostasis. Soluble oligomers are toxic to cultured neuroblastoma cells and induce apoptosis (in vitro). Association with GPC1 (via its heparan sulfate chains) targets PRNP to lipid rafts. Also provides Cu(2+) or Zn(2+) for the ascorbate-mediated GPC1 deaminase degradation of its heparan sulfate side chains (By similarity).</text>
</comment>
<comment type="subunit">
    <text evidence="2 4">Monomer and homodimer. Has a tendency to aggregate into amyloid fibrils containing a cross-beta spine, formed by a steric zipper of superposed beta-strands. Soluble oligomers may represent an intermediate stage on the path to fibril formation. Copper binding may promote oligomerization. Interacts with GRB2, APP, ERI3/PRNPIP and SYN1. Mislocalized cytosolically exposed PrP interacts with MGRN1; this interaction alters MGRN1 subcellular location and causes lysosomal enlargement. Interacts with KIAA1191.</text>
</comment>
<comment type="subcellular location">
    <subcellularLocation>
        <location evidence="2">Cell membrane</location>
        <topology evidence="2">Lipid-anchor</topology>
        <topology evidence="2">GPI-anchor</topology>
    </subcellularLocation>
    <subcellularLocation>
        <location evidence="4">Golgi apparatus</location>
    </subcellularLocation>
    <text evidence="2">Targeted to lipid rafts via association with the heparan sulfate chains of GPC1. Colocates, in the presence of Cu(2+), to vesicles in para- and perinuclear regions, where both proteins undergo internalization. Heparin displaces PRNP from lipid rafts and promotes endocytosis.</text>
</comment>
<comment type="domain">
    <text evidence="2">The normal, monomeric form has a mainly alpha-helical structure. The disease-associated, protease-resistant form forms amyloid fibrils containing a cross-beta spine, formed by a steric zipper of superposed beta-strands. Disease mutations may favor intermolecular contacts via short beta strands, and may thereby trigger oligomerization.</text>
</comment>
<comment type="domain">
    <text evidence="2">Contains an N-terminal region composed of octamer repeats. At low copper concentrations, the sidechains of His residues from three or four repeats contribute to the binding of a single copper ion. Alternatively, a copper ion can be bound by interaction with the sidechain and backbone amide nitrogen of a single His residue. The observed copper binding stoichiometry suggests that two repeat regions cooperate to stabilize the binding of a single copper ion. At higher copper concentrations, each octamer can bind one copper ion by interactions with the His sidechain and Gly backbone atoms. A mixture of binding types may occur, especially in the case of octamer repeat expansion. Copper binding may stabilize the conformation of this region and may promote oligomerization.</text>
</comment>
<comment type="disease">
    <text evidence="7">Found in high quantity in the brain of humans and animals infected with degenerative neurological diseases such as kuru, Creutzfeldt-Jakob disease (CJD), Gerstmann-Straussler syndrome (GSS), scrapie, bovine spongiform encephalopathy (BSE), transmissible mink encephalopathy (TME), etc.</text>
</comment>
<comment type="similarity">
    <text evidence="7">Belongs to the prion family.</text>
</comment>
<proteinExistence type="inferred from homology"/>
<name>PRIO_RUPRU</name>
<keyword id="KW-0034">Amyloid</keyword>
<keyword id="KW-1003">Cell membrane</keyword>
<keyword id="KW-0186">Copper</keyword>
<keyword id="KW-1015">Disulfide bond</keyword>
<keyword id="KW-0325">Glycoprotein</keyword>
<keyword id="KW-0333">Golgi apparatus</keyword>
<keyword id="KW-0336">GPI-anchor</keyword>
<keyword id="KW-0449">Lipoprotein</keyword>
<keyword id="KW-0472">Membrane</keyword>
<keyword id="KW-0479">Metal-binding</keyword>
<keyword id="KW-0640">Prion</keyword>
<keyword id="KW-0677">Repeat</keyword>
<keyword id="KW-0732">Signal</keyword>
<keyword id="KW-0862">Zinc</keyword>
<protein>
    <recommendedName>
        <fullName>Major prion protein</fullName>
        <shortName>PrP</shortName>
    </recommendedName>
    <cdAntigenName>CD230</cdAntigenName>
</protein>
<gene>
    <name type="primary">PRNP</name>
    <name type="synonym">PRP</name>
</gene>
<accession>Q5XVM4</accession>
<organism>
    <name type="scientific">Rupicapra rupicapra</name>
    <name type="common">Alpine chamois</name>
    <dbReference type="NCBI Taxonomy" id="34869"/>
    <lineage>
        <taxon>Eukaryota</taxon>
        <taxon>Metazoa</taxon>
        <taxon>Chordata</taxon>
        <taxon>Craniata</taxon>
        <taxon>Vertebrata</taxon>
        <taxon>Euteleostomi</taxon>
        <taxon>Mammalia</taxon>
        <taxon>Eutheria</taxon>
        <taxon>Laurasiatheria</taxon>
        <taxon>Artiodactyla</taxon>
        <taxon>Ruminantia</taxon>
        <taxon>Pecora</taxon>
        <taxon>Bovidae</taxon>
        <taxon>Caprinae</taxon>
        <taxon>Rupicapra</taxon>
    </lineage>
</organism>
<sequence>MVKSHIGSWILVLFVAMWSDVGLCKKRPKPGGGWNTGGSRYPGQGSPGGNRYPPQGGGGWGQPHGGGWGQPHGGGWGQPHGGGWGQPHGGGGWGQGGSHSQWNKPSKPKTNMKHVAGAAAAGAVVGGLGGYMLGSAMSRPLIHFGNDYEDRYYRENMYRYPNQVYYRPVDQYSNQNNFVHDCVNITVKQHTVTTTTKGENFTETDIKIMERVVEQMCITQYQRESQAYYQRGASVILFSSPPVILLISFLIFLIVG</sequence>
<feature type="signal peptide" evidence="1">
    <location>
        <begin position="1"/>
        <end position="24"/>
    </location>
</feature>
<feature type="chain" id="PRO_0000224244" description="Major prion protein">
    <location>
        <begin position="25"/>
        <end position="233"/>
    </location>
</feature>
<feature type="propeptide" id="PRO_0000224245" description="Removed in mature form" evidence="5">
    <location>
        <begin position="234"/>
        <end position="256"/>
    </location>
</feature>
<feature type="repeat" description="1">
    <location>
        <begin position="54"/>
        <end position="62"/>
    </location>
</feature>
<feature type="repeat" description="2">
    <location>
        <begin position="63"/>
        <end position="70"/>
    </location>
</feature>
<feature type="repeat" description="3">
    <location>
        <begin position="71"/>
        <end position="78"/>
    </location>
</feature>
<feature type="repeat" description="4">
    <location>
        <begin position="79"/>
        <end position="86"/>
    </location>
</feature>
<feature type="repeat" description="5">
    <location>
        <begin position="87"/>
        <end position="95"/>
    </location>
</feature>
<feature type="region of interest" description="Interaction with GRB2, ERI3 and SYN1" evidence="4">
    <location>
        <begin position="25"/>
        <end position="233"/>
    </location>
</feature>
<feature type="region of interest" description="Disordered" evidence="6">
    <location>
        <begin position="28"/>
        <end position="110"/>
    </location>
</feature>
<feature type="region of interest" description="5 X 8 AA tandem repeats of P-H-G-G-G-W-G-Q">
    <location>
        <begin position="54"/>
        <end position="95"/>
    </location>
</feature>
<feature type="compositionally biased region" description="Gly residues" evidence="6">
    <location>
        <begin position="55"/>
        <end position="97"/>
    </location>
</feature>
<feature type="binding site" evidence="2">
    <location>
        <position position="64"/>
    </location>
    <ligand>
        <name>Cu(2+)</name>
        <dbReference type="ChEBI" id="CHEBI:29036"/>
        <label>1</label>
    </ligand>
</feature>
<feature type="binding site" evidence="2">
    <location>
        <position position="65"/>
    </location>
    <ligand>
        <name>Cu(2+)</name>
        <dbReference type="ChEBI" id="CHEBI:29036"/>
        <label>1</label>
    </ligand>
</feature>
<feature type="binding site" evidence="2">
    <location>
        <position position="66"/>
    </location>
    <ligand>
        <name>Cu(2+)</name>
        <dbReference type="ChEBI" id="CHEBI:29036"/>
        <label>1</label>
    </ligand>
</feature>
<feature type="binding site" evidence="2">
    <location>
        <position position="72"/>
    </location>
    <ligand>
        <name>Cu(2+)</name>
        <dbReference type="ChEBI" id="CHEBI:29036"/>
        <label>2</label>
    </ligand>
</feature>
<feature type="binding site" evidence="2">
    <location>
        <position position="73"/>
    </location>
    <ligand>
        <name>Cu(2+)</name>
        <dbReference type="ChEBI" id="CHEBI:29036"/>
        <label>2</label>
    </ligand>
</feature>
<feature type="binding site" evidence="2">
    <location>
        <position position="74"/>
    </location>
    <ligand>
        <name>Cu(2+)</name>
        <dbReference type="ChEBI" id="CHEBI:29036"/>
        <label>2</label>
    </ligand>
</feature>
<feature type="binding site" evidence="2">
    <location>
        <position position="80"/>
    </location>
    <ligand>
        <name>Cu(2+)</name>
        <dbReference type="ChEBI" id="CHEBI:29036"/>
        <label>3</label>
    </ligand>
</feature>
<feature type="binding site" evidence="2">
    <location>
        <position position="81"/>
    </location>
    <ligand>
        <name>Cu(2+)</name>
        <dbReference type="ChEBI" id="CHEBI:29036"/>
        <label>3</label>
    </ligand>
</feature>
<feature type="binding site" evidence="2">
    <location>
        <position position="82"/>
    </location>
    <ligand>
        <name>Cu(2+)</name>
        <dbReference type="ChEBI" id="CHEBI:29036"/>
        <label>3</label>
    </ligand>
</feature>
<feature type="binding site" evidence="2">
    <location>
        <position position="88"/>
    </location>
    <ligand>
        <name>Cu(2+)</name>
        <dbReference type="ChEBI" id="CHEBI:29036"/>
        <label>4</label>
    </ligand>
</feature>
<feature type="binding site" evidence="2">
    <location>
        <position position="90"/>
    </location>
    <ligand>
        <name>Cu(2+)</name>
        <dbReference type="ChEBI" id="CHEBI:29036"/>
        <label>4</label>
    </ligand>
</feature>
<feature type="binding site" evidence="2">
    <location>
        <position position="91"/>
    </location>
    <ligand>
        <name>Cu(2+)</name>
        <dbReference type="ChEBI" id="CHEBI:29036"/>
        <label>4</label>
    </ligand>
</feature>
<feature type="lipid moiety-binding region" description="GPI-anchor amidated alanine" evidence="5">
    <location>
        <position position="233"/>
    </location>
</feature>
<feature type="glycosylation site" description="N-linked (GlcNAc...) asparagine" evidence="5">
    <location>
        <position position="184"/>
    </location>
</feature>
<feature type="glycosylation site" description="N-linked (GlcNAc...) asparagine" evidence="5">
    <location>
        <position position="200"/>
    </location>
</feature>
<feature type="disulfide bond" evidence="3">
    <location>
        <begin position="182"/>
        <end position="217"/>
    </location>
</feature>
<reference key="1">
    <citation type="submission" date="2004-08" db="EMBL/GenBank/DDBJ databases">
        <authorList>
            <person name="Acutis P.L."/>
            <person name="Peletto S."/>
            <person name="Sbaiz L."/>
            <person name="Caramelli M."/>
        </authorList>
    </citation>
    <scope>NUCLEOTIDE SEQUENCE [GENOMIC DNA]</scope>
</reference>
<evidence type="ECO:0000250" key="1"/>
<evidence type="ECO:0000250" key="2">
    <source>
        <dbReference type="UniProtKB" id="P04156"/>
    </source>
</evidence>
<evidence type="ECO:0000250" key="3">
    <source>
        <dbReference type="UniProtKB" id="P04273"/>
    </source>
</evidence>
<evidence type="ECO:0000250" key="4">
    <source>
        <dbReference type="UniProtKB" id="P04925"/>
    </source>
</evidence>
<evidence type="ECO:0000255" key="5"/>
<evidence type="ECO:0000256" key="6">
    <source>
        <dbReference type="SAM" id="MobiDB-lite"/>
    </source>
</evidence>
<evidence type="ECO:0000305" key="7"/>
<dbReference type="EMBL" id="AY735496">
    <property type="protein sequence ID" value="AAU44365.1"/>
    <property type="molecule type" value="Genomic_DNA"/>
</dbReference>
<dbReference type="SMR" id="Q5XVM4"/>
<dbReference type="GlyCosmos" id="Q5XVM4">
    <property type="glycosylation" value="2 sites, No reported glycans"/>
</dbReference>
<dbReference type="GO" id="GO:0005794">
    <property type="term" value="C:Golgi apparatus"/>
    <property type="evidence" value="ECO:0007669"/>
    <property type="project" value="UniProtKB-SubCell"/>
</dbReference>
<dbReference type="GO" id="GO:0005886">
    <property type="term" value="C:plasma membrane"/>
    <property type="evidence" value="ECO:0007669"/>
    <property type="project" value="UniProtKB-SubCell"/>
</dbReference>
<dbReference type="GO" id="GO:0098552">
    <property type="term" value="C:side of membrane"/>
    <property type="evidence" value="ECO:0007669"/>
    <property type="project" value="UniProtKB-KW"/>
</dbReference>
<dbReference type="GO" id="GO:0005507">
    <property type="term" value="F:copper ion binding"/>
    <property type="evidence" value="ECO:0000250"/>
    <property type="project" value="UniProtKB"/>
</dbReference>
<dbReference type="GO" id="GO:0051260">
    <property type="term" value="P:protein homooligomerization"/>
    <property type="evidence" value="ECO:0007669"/>
    <property type="project" value="InterPro"/>
</dbReference>
<dbReference type="FunFam" id="1.10.790.10:FF:000001">
    <property type="entry name" value="Major prion protein"/>
    <property type="match status" value="1"/>
</dbReference>
<dbReference type="Gene3D" id="1.10.790.10">
    <property type="entry name" value="Prion/Doppel protein, beta-ribbon domain"/>
    <property type="match status" value="1"/>
</dbReference>
<dbReference type="InterPro" id="IPR000817">
    <property type="entry name" value="Prion"/>
</dbReference>
<dbReference type="InterPro" id="IPR036924">
    <property type="entry name" value="Prion/Doppel_b-ribbon_dom_sf"/>
</dbReference>
<dbReference type="InterPro" id="IPR022416">
    <property type="entry name" value="Prion/Doppel_prot_b-ribbon_dom"/>
</dbReference>
<dbReference type="InterPro" id="IPR020949">
    <property type="entry name" value="Prion_copper_b_octapeptide"/>
</dbReference>
<dbReference type="InterPro" id="IPR025860">
    <property type="entry name" value="Prion_N"/>
</dbReference>
<dbReference type="PANTHER" id="PTHR15506">
    <property type="entry name" value="DOPPEL PRION"/>
    <property type="match status" value="1"/>
</dbReference>
<dbReference type="PANTHER" id="PTHR15506:SF2">
    <property type="entry name" value="MAJOR PRION PROTEIN"/>
    <property type="match status" value="1"/>
</dbReference>
<dbReference type="Pfam" id="PF00377">
    <property type="entry name" value="Prion"/>
    <property type="match status" value="1"/>
</dbReference>
<dbReference type="Pfam" id="PF11587">
    <property type="entry name" value="Prion_bPrPp"/>
    <property type="match status" value="1"/>
</dbReference>
<dbReference type="Pfam" id="PF03991">
    <property type="entry name" value="Prion_octapep"/>
    <property type="match status" value="1"/>
</dbReference>
<dbReference type="PRINTS" id="PR00341">
    <property type="entry name" value="PRION"/>
</dbReference>
<dbReference type="SMART" id="SM00157">
    <property type="entry name" value="PRP"/>
    <property type="match status" value="1"/>
</dbReference>
<dbReference type="SUPFAM" id="SSF54098">
    <property type="entry name" value="Prion-like"/>
    <property type="match status" value="1"/>
</dbReference>
<dbReference type="PROSITE" id="PS00291">
    <property type="entry name" value="PRION_1"/>
    <property type="match status" value="1"/>
</dbReference>
<dbReference type="PROSITE" id="PS00706">
    <property type="entry name" value="PRION_2"/>
    <property type="match status" value="1"/>
</dbReference>